<organism>
    <name type="scientific">Rhodobacter capsulatus (strain ATCC BAA-309 / NBRC 16581 / SB1003)</name>
    <dbReference type="NCBI Taxonomy" id="272942"/>
    <lineage>
        <taxon>Bacteria</taxon>
        <taxon>Pseudomonadati</taxon>
        <taxon>Pseudomonadota</taxon>
        <taxon>Alphaproteobacteria</taxon>
        <taxon>Rhodobacterales</taxon>
        <taxon>Rhodobacter group</taxon>
        <taxon>Rhodobacter</taxon>
    </lineage>
</organism>
<reference key="1">
    <citation type="journal article" date="2010" name="J. Bacteriol.">
        <title>Complete genome sequence of the photosynthetic purple nonsulfur bacterium Rhodobacter capsulatus SB 1003.</title>
        <authorList>
            <person name="Strnad H."/>
            <person name="Lapidus A."/>
            <person name="Paces J."/>
            <person name="Ulbrich P."/>
            <person name="Vlcek C."/>
            <person name="Paces V."/>
            <person name="Haselkorn R."/>
        </authorList>
    </citation>
    <scope>NUCLEOTIDE SEQUENCE [LARGE SCALE GENOMIC DNA]</scope>
    <source>
        <strain>ATCC BAA-309 / NBRC 16581 / SB1003</strain>
    </source>
</reference>
<reference key="2">
    <citation type="submission" date="1996-01" db="EMBL/GenBank/DDBJ databases">
        <title>Rhodobacter capsulatus cycH: a bipartite gene that affects differentially the biogenesis of various c-type cytochromes.</title>
        <authorList>
            <person name="Lang S.E."/>
            <person name="Jenney F.E. Jr."/>
            <person name="Daldal F."/>
        </authorList>
    </citation>
    <scope>NUCLEOTIDE SEQUENCE [GENOMIC DNA] OF 1-208</scope>
    <source>
        <strain>MT1131</strain>
    </source>
</reference>
<feature type="chain" id="PRO_0000072046" description="Sarcosine oxidase subunit beta">
    <location>
        <begin position="1"/>
        <end position="414"/>
    </location>
</feature>
<feature type="binding site" evidence="2">
    <location>
        <position position="42"/>
    </location>
    <ligand>
        <name>FAD</name>
        <dbReference type="ChEBI" id="CHEBI:57692"/>
    </ligand>
</feature>
<feature type="binding site" evidence="2">
    <location>
        <position position="43"/>
    </location>
    <ligand>
        <name>FAD</name>
        <dbReference type="ChEBI" id="CHEBI:57692"/>
    </ligand>
</feature>
<feature type="binding site" evidence="2">
    <location>
        <position position="64"/>
    </location>
    <ligand>
        <name>FAD</name>
        <dbReference type="ChEBI" id="CHEBI:57692"/>
    </ligand>
</feature>
<feature type="binding site" evidence="2">
    <location>
        <position position="72"/>
    </location>
    <ligand>
        <name>FAD</name>
        <dbReference type="ChEBI" id="CHEBI:57692"/>
    </ligand>
</feature>
<feature type="binding site" evidence="2">
    <location>
        <position position="77"/>
    </location>
    <ligand>
        <name>FAD</name>
        <dbReference type="ChEBI" id="CHEBI:57692"/>
    </ligand>
</feature>
<feature type="binding site" evidence="2">
    <location>
        <position position="79"/>
    </location>
    <ligand>
        <name>FAD</name>
        <dbReference type="ChEBI" id="CHEBI:57692"/>
    </ligand>
</feature>
<feature type="binding site" evidence="2">
    <location>
        <position position="207"/>
    </location>
    <ligand>
        <name>FAD</name>
        <dbReference type="ChEBI" id="CHEBI:57692"/>
    </ligand>
</feature>
<feature type="binding site" evidence="2">
    <location>
        <position position="364"/>
    </location>
    <ligand>
        <name>FAD</name>
        <dbReference type="ChEBI" id="CHEBI:57692"/>
    </ligand>
</feature>
<feature type="binding site" evidence="2">
    <location>
        <position position="367"/>
    </location>
    <ligand>
        <name>FAD</name>
        <dbReference type="ChEBI" id="CHEBI:57692"/>
    </ligand>
</feature>
<feature type="binding site" evidence="2">
    <location>
        <position position="369"/>
    </location>
    <ligand>
        <name>FAD</name>
        <dbReference type="ChEBI" id="CHEBI:57692"/>
    </ligand>
</feature>
<feature type="modified residue" description="Tele-8alpha-FMN histidine" evidence="2">
    <location>
        <position position="183"/>
    </location>
</feature>
<sequence>MRRYSIFAVAREALRYHSGWEKAWASPEPKKRYDVIVVGAGGHGLATAYYLGKVHGIKNVAIIEKGWLGGGNTGRNTTIIRSNYLQDPSAAIYEKARSLYEGLSQDLNYNVMFSPRGLLMLAQSEHEMRGYKRTVYANNLQNVETRWIEPKEVKKLVPILNIAGPRYPVLGALLQEKGGTARHDAVAWGYARACSDMGMDLLQNTEVTGVRTEGGRVVGVDTSRGSIDCGKLAIVVAGHSSVLAGMAGFRLPIESMALQAWVSEPIKPTIDVVVMANLVHGYMSQSDKGELVIGGGTDGFNNYSQRGSWHHVEETTRALIETFPVISRLKMLRQWGGIVDMTGDRSPILSKTPVDGIFVNCGWGTGGFKAIPGSGFAMAELVAKGYSPLAAEFGLHRFKEGQFIDESVAAGVAH</sequence>
<evidence type="ECO:0000250" key="1">
    <source>
        <dbReference type="UniProtKB" id="P40875"/>
    </source>
</evidence>
<evidence type="ECO:0000250" key="2">
    <source>
        <dbReference type="UniProtKB" id="Q50LF2"/>
    </source>
</evidence>
<evidence type="ECO:0000305" key="3"/>
<gene>
    <name type="primary">soxB</name>
    <name type="ordered locus">RCAP_rcc02316</name>
</gene>
<accession>Q52671</accession>
<accession>D5ALI5</accession>
<name>TSOXB_RHOCB</name>
<proteinExistence type="inferred from homology"/>
<comment type="function">
    <text evidence="1">In the presence of tetrahydrofolate, catalyzes the oxidative demethylation of sarcosine to yield glycine, 5,10-methylenetetrahydrofolate and hydrogen peroxide (By similarity). In the absence of tetrahydrofolate, catalyzes the oxidative demethylation of sarcosine to yield glycine, formaldehyde and hydrogen peroxide (By similarity).</text>
</comment>
<comment type="catalytic activity">
    <reaction evidence="1">
        <text>sarcosine + (6S)-5,6,7,8-tetrahydrofolate + O2 = (6R)-5,10-methylene-5,6,7,8-tetrahydrofolate + glycine + H2O2</text>
        <dbReference type="Rhea" id="RHEA:70455"/>
        <dbReference type="ChEBI" id="CHEBI:15379"/>
        <dbReference type="ChEBI" id="CHEBI:15636"/>
        <dbReference type="ChEBI" id="CHEBI:16240"/>
        <dbReference type="ChEBI" id="CHEBI:57305"/>
        <dbReference type="ChEBI" id="CHEBI:57433"/>
        <dbReference type="ChEBI" id="CHEBI:57453"/>
        <dbReference type="EC" id="1.5.3.24"/>
    </reaction>
</comment>
<comment type="catalytic activity">
    <reaction evidence="1">
        <text>sarcosine + O2 + H2O = formaldehyde + glycine + H2O2</text>
        <dbReference type="Rhea" id="RHEA:13313"/>
        <dbReference type="ChEBI" id="CHEBI:15377"/>
        <dbReference type="ChEBI" id="CHEBI:15379"/>
        <dbReference type="ChEBI" id="CHEBI:16240"/>
        <dbReference type="ChEBI" id="CHEBI:16842"/>
        <dbReference type="ChEBI" id="CHEBI:57305"/>
        <dbReference type="ChEBI" id="CHEBI:57433"/>
    </reaction>
</comment>
<comment type="cofactor">
    <cofactor evidence="1">
        <name>FAD</name>
        <dbReference type="ChEBI" id="CHEBI:57692"/>
    </cofactor>
    <text evidence="1">Binds 1 FAD per subunit.</text>
</comment>
<comment type="cofactor">
    <cofactor evidence="1">
        <name>FMN</name>
        <dbReference type="ChEBI" id="CHEBI:58210"/>
    </cofactor>
    <text evidence="1">Binds 1 FMN covalently.</text>
</comment>
<comment type="subunit">
    <text evidence="1">Heterotetramer composed of subunits alpha (SoxA), beta (SoxB), gamma (SoxG) and delta (SoxD).</text>
</comment>
<comment type="subcellular location">
    <subcellularLocation>
        <location evidence="1">Cytoplasm</location>
    </subcellularLocation>
</comment>
<comment type="similarity">
    <text evidence="3">Belongs to the SoxB family.</text>
</comment>
<protein>
    <recommendedName>
        <fullName evidence="1">Sarcosine oxidase subunit beta</fullName>
        <shortName evidence="1">Sarcosine oxidase subunit B</shortName>
        <ecNumber evidence="1">1.5.3.24</ecNumber>
    </recommendedName>
    <alternativeName>
        <fullName evidence="1">Sarcosine oxidase (5,10-methylenetetrahydrofolate-forming) subunit beta</fullName>
    </alternativeName>
    <alternativeName>
        <fullName evidence="1">Tetrameric sarcosine oxidase subunit beta</fullName>
        <shortName evidence="1">TSOX subunit beta</shortName>
    </alternativeName>
</protein>
<keyword id="KW-0963">Cytoplasm</keyword>
<keyword id="KW-0274">FAD</keyword>
<keyword id="KW-0285">Flavoprotein</keyword>
<keyword id="KW-0288">FMN</keyword>
<keyword id="KW-0547">Nucleotide-binding</keyword>
<keyword id="KW-0560">Oxidoreductase</keyword>
<keyword id="KW-1185">Reference proteome</keyword>
<dbReference type="EC" id="1.5.3.24" evidence="1"/>
<dbReference type="EMBL" id="CP001312">
    <property type="protein sequence ID" value="ADE86046.1"/>
    <property type="molecule type" value="Genomic_DNA"/>
</dbReference>
<dbReference type="EMBL" id="U46071">
    <property type="protein sequence ID" value="AAB01814.1"/>
    <property type="molecule type" value="Genomic_DNA"/>
</dbReference>
<dbReference type="RefSeq" id="WP_013068025.1">
    <property type="nucleotide sequence ID" value="NC_014034.1"/>
</dbReference>
<dbReference type="SMR" id="Q52671"/>
<dbReference type="STRING" id="272942.RCAP_rcc02316"/>
<dbReference type="GeneID" id="31491151"/>
<dbReference type="KEGG" id="rcp:RCAP_rcc02316"/>
<dbReference type="eggNOG" id="COG0665">
    <property type="taxonomic scope" value="Bacteria"/>
</dbReference>
<dbReference type="HOGENOM" id="CLU_007884_4_1_5"/>
<dbReference type="OrthoDB" id="9815989at2"/>
<dbReference type="Proteomes" id="UP000002361">
    <property type="component" value="Chromosome"/>
</dbReference>
<dbReference type="GO" id="GO:0005737">
    <property type="term" value="C:cytoplasm"/>
    <property type="evidence" value="ECO:0007669"/>
    <property type="project" value="UniProtKB-SubCell"/>
</dbReference>
<dbReference type="GO" id="GO:0000166">
    <property type="term" value="F:nucleotide binding"/>
    <property type="evidence" value="ECO:0007669"/>
    <property type="project" value="UniProtKB-KW"/>
</dbReference>
<dbReference type="GO" id="GO:0008115">
    <property type="term" value="F:sarcosine oxidase activity"/>
    <property type="evidence" value="ECO:0007669"/>
    <property type="project" value="UniProtKB-EC"/>
</dbReference>
<dbReference type="GO" id="GO:0046653">
    <property type="term" value="P:tetrahydrofolate metabolic process"/>
    <property type="evidence" value="ECO:0007669"/>
    <property type="project" value="InterPro"/>
</dbReference>
<dbReference type="Gene3D" id="3.30.9.10">
    <property type="entry name" value="D-Amino Acid Oxidase, subunit A, domain 2"/>
    <property type="match status" value="1"/>
</dbReference>
<dbReference type="Gene3D" id="3.50.50.60">
    <property type="entry name" value="FAD/NAD(P)-binding domain"/>
    <property type="match status" value="1"/>
</dbReference>
<dbReference type="InterPro" id="IPR006076">
    <property type="entry name" value="FAD-dep_OxRdtase"/>
</dbReference>
<dbReference type="InterPro" id="IPR036188">
    <property type="entry name" value="FAD/NAD-bd_sf"/>
</dbReference>
<dbReference type="InterPro" id="IPR001763">
    <property type="entry name" value="Rhodanese-like_dom"/>
</dbReference>
<dbReference type="InterPro" id="IPR006278">
    <property type="entry name" value="SoxB"/>
</dbReference>
<dbReference type="NCBIfam" id="TIGR01373">
    <property type="entry name" value="soxB"/>
    <property type="match status" value="1"/>
</dbReference>
<dbReference type="PANTHER" id="PTHR13847:SF287">
    <property type="entry name" value="FAD-DEPENDENT OXIDOREDUCTASE DOMAIN-CONTAINING PROTEIN 1"/>
    <property type="match status" value="1"/>
</dbReference>
<dbReference type="PANTHER" id="PTHR13847">
    <property type="entry name" value="SARCOSINE DEHYDROGENASE-RELATED"/>
    <property type="match status" value="1"/>
</dbReference>
<dbReference type="Pfam" id="PF01266">
    <property type="entry name" value="DAO"/>
    <property type="match status" value="1"/>
</dbReference>
<dbReference type="SUPFAM" id="SSF51905">
    <property type="entry name" value="FAD/NAD(P)-binding domain"/>
    <property type="match status" value="1"/>
</dbReference>